<reference key="1">
    <citation type="journal article" date="2002" name="Environ. Microbiol.">
        <title>Complete genome sequence and comparative analysis of the metabolically versatile Pseudomonas putida KT2440.</title>
        <authorList>
            <person name="Nelson K.E."/>
            <person name="Weinel C."/>
            <person name="Paulsen I.T."/>
            <person name="Dodson R.J."/>
            <person name="Hilbert H."/>
            <person name="Martins dos Santos V.A.P."/>
            <person name="Fouts D.E."/>
            <person name="Gill S.R."/>
            <person name="Pop M."/>
            <person name="Holmes M."/>
            <person name="Brinkac L.M."/>
            <person name="Beanan M.J."/>
            <person name="DeBoy R.T."/>
            <person name="Daugherty S.C."/>
            <person name="Kolonay J.F."/>
            <person name="Madupu R."/>
            <person name="Nelson W.C."/>
            <person name="White O."/>
            <person name="Peterson J.D."/>
            <person name="Khouri H.M."/>
            <person name="Hance I."/>
            <person name="Chris Lee P."/>
            <person name="Holtzapple E.K."/>
            <person name="Scanlan D."/>
            <person name="Tran K."/>
            <person name="Moazzez A."/>
            <person name="Utterback T.R."/>
            <person name="Rizzo M."/>
            <person name="Lee K."/>
            <person name="Kosack D."/>
            <person name="Moestl D."/>
            <person name="Wedler H."/>
            <person name="Lauber J."/>
            <person name="Stjepandic D."/>
            <person name="Hoheisel J."/>
            <person name="Straetz M."/>
            <person name="Heim S."/>
            <person name="Kiewitz C."/>
            <person name="Eisen J.A."/>
            <person name="Timmis K.N."/>
            <person name="Duesterhoeft A."/>
            <person name="Tuemmler B."/>
            <person name="Fraser C.M."/>
        </authorList>
    </citation>
    <scope>NUCLEOTIDE SEQUENCE [LARGE SCALE GENOMIC DNA]</scope>
    <source>
        <strain>ATCC 47054 / DSM 6125 / CFBP 8728 / NCIMB 11950 / KT2440</strain>
    </source>
</reference>
<protein>
    <recommendedName>
        <fullName evidence="1">Uridylate kinase</fullName>
        <shortName evidence="1">UK</shortName>
        <ecNumber evidence="1">2.7.4.22</ecNumber>
    </recommendedName>
    <alternativeName>
        <fullName evidence="1">Uridine monophosphate kinase</fullName>
        <shortName evidence="1">UMP kinase</shortName>
        <shortName evidence="1">UMPK</shortName>
    </alternativeName>
</protein>
<keyword id="KW-0067">ATP-binding</keyword>
<keyword id="KW-0963">Cytoplasm</keyword>
<keyword id="KW-0418">Kinase</keyword>
<keyword id="KW-0547">Nucleotide-binding</keyword>
<keyword id="KW-0665">Pyrimidine biosynthesis</keyword>
<keyword id="KW-1185">Reference proteome</keyword>
<keyword id="KW-0808">Transferase</keyword>
<name>PYRH_PSEPK</name>
<sequence length="247" mass="26484">MAQQVSGRQPRYKRILLKLSGEALMGSEDFGIDPKVLDRMALEVGQLVGIGVQVGLVIGGGNLFRGAALSAAGMDRVTGDHMGMLATVMNGLAMRDALERSNIPALVMSAISMVGVTDHYDRRKAIRHLNSGDVVIFSAGTGNPFFTTDSAACLRAIEIDADVVLKATKVDGVYTADPFKDPHAEKFDHLTYDEVLDRKLGVMDLTAICLCRDHKMPLRVFNMNKPGALLNIVVGGAEGTLIEEGQA</sequence>
<accession>Q88MH8</accession>
<gene>
    <name evidence="1" type="primary">pyrH</name>
    <name type="ordered locus">PP_1593</name>
</gene>
<evidence type="ECO:0000255" key="1">
    <source>
        <dbReference type="HAMAP-Rule" id="MF_01220"/>
    </source>
</evidence>
<proteinExistence type="inferred from homology"/>
<comment type="function">
    <text evidence="1">Catalyzes the reversible phosphorylation of UMP to UDP.</text>
</comment>
<comment type="catalytic activity">
    <reaction evidence="1">
        <text>UMP + ATP = UDP + ADP</text>
        <dbReference type="Rhea" id="RHEA:24400"/>
        <dbReference type="ChEBI" id="CHEBI:30616"/>
        <dbReference type="ChEBI" id="CHEBI:57865"/>
        <dbReference type="ChEBI" id="CHEBI:58223"/>
        <dbReference type="ChEBI" id="CHEBI:456216"/>
        <dbReference type="EC" id="2.7.4.22"/>
    </reaction>
</comment>
<comment type="activity regulation">
    <text evidence="1">Inhibited by UTP.</text>
</comment>
<comment type="pathway">
    <text evidence="1">Pyrimidine metabolism; CTP biosynthesis via de novo pathway; UDP from UMP (UMPK route): step 1/1.</text>
</comment>
<comment type="subunit">
    <text evidence="1">Homohexamer.</text>
</comment>
<comment type="subcellular location">
    <subcellularLocation>
        <location evidence="1">Cytoplasm</location>
    </subcellularLocation>
</comment>
<comment type="similarity">
    <text evidence="1">Belongs to the UMP kinase family.</text>
</comment>
<organism>
    <name type="scientific">Pseudomonas putida (strain ATCC 47054 / DSM 6125 / CFBP 8728 / NCIMB 11950 / KT2440)</name>
    <dbReference type="NCBI Taxonomy" id="160488"/>
    <lineage>
        <taxon>Bacteria</taxon>
        <taxon>Pseudomonadati</taxon>
        <taxon>Pseudomonadota</taxon>
        <taxon>Gammaproteobacteria</taxon>
        <taxon>Pseudomonadales</taxon>
        <taxon>Pseudomonadaceae</taxon>
        <taxon>Pseudomonas</taxon>
    </lineage>
</organism>
<feature type="chain" id="PRO_0000143871" description="Uridylate kinase">
    <location>
        <begin position="1"/>
        <end position="247"/>
    </location>
</feature>
<feature type="binding site" evidence="1">
    <location>
        <begin position="18"/>
        <end position="21"/>
    </location>
    <ligand>
        <name>ATP</name>
        <dbReference type="ChEBI" id="CHEBI:30616"/>
    </ligand>
</feature>
<feature type="binding site" evidence="1">
    <location>
        <position position="60"/>
    </location>
    <ligand>
        <name>UMP</name>
        <dbReference type="ChEBI" id="CHEBI:57865"/>
    </ligand>
</feature>
<feature type="binding site" evidence="1">
    <location>
        <position position="61"/>
    </location>
    <ligand>
        <name>ATP</name>
        <dbReference type="ChEBI" id="CHEBI:30616"/>
    </ligand>
</feature>
<feature type="binding site" evidence="1">
    <location>
        <position position="65"/>
    </location>
    <ligand>
        <name>ATP</name>
        <dbReference type="ChEBI" id="CHEBI:30616"/>
    </ligand>
</feature>
<feature type="binding site" evidence="1">
    <location>
        <position position="80"/>
    </location>
    <ligand>
        <name>UMP</name>
        <dbReference type="ChEBI" id="CHEBI:57865"/>
    </ligand>
</feature>
<feature type="binding site" evidence="1">
    <location>
        <begin position="141"/>
        <end position="148"/>
    </location>
    <ligand>
        <name>UMP</name>
        <dbReference type="ChEBI" id="CHEBI:57865"/>
    </ligand>
</feature>
<feature type="binding site" evidence="1">
    <location>
        <position position="168"/>
    </location>
    <ligand>
        <name>ATP</name>
        <dbReference type="ChEBI" id="CHEBI:30616"/>
    </ligand>
</feature>
<feature type="binding site" evidence="1">
    <location>
        <position position="174"/>
    </location>
    <ligand>
        <name>ATP</name>
        <dbReference type="ChEBI" id="CHEBI:30616"/>
    </ligand>
</feature>
<feature type="binding site" evidence="1">
    <location>
        <position position="177"/>
    </location>
    <ligand>
        <name>ATP</name>
        <dbReference type="ChEBI" id="CHEBI:30616"/>
    </ligand>
</feature>
<dbReference type="EC" id="2.7.4.22" evidence="1"/>
<dbReference type="EMBL" id="AE015451">
    <property type="protein sequence ID" value="AAN67214.1"/>
    <property type="molecule type" value="Genomic_DNA"/>
</dbReference>
<dbReference type="RefSeq" id="NP_743750.1">
    <property type="nucleotide sequence ID" value="NC_002947.4"/>
</dbReference>
<dbReference type="RefSeq" id="WP_003252294.1">
    <property type="nucleotide sequence ID" value="NZ_CP169744.1"/>
</dbReference>
<dbReference type="SMR" id="Q88MH8"/>
<dbReference type="STRING" id="160488.PP_1593"/>
<dbReference type="PaxDb" id="160488-PP_1593"/>
<dbReference type="GeneID" id="97166658"/>
<dbReference type="KEGG" id="ppu:PP_1593"/>
<dbReference type="PATRIC" id="fig|160488.4.peg.1684"/>
<dbReference type="eggNOG" id="COG0528">
    <property type="taxonomic scope" value="Bacteria"/>
</dbReference>
<dbReference type="HOGENOM" id="CLU_033861_0_0_6"/>
<dbReference type="OrthoDB" id="9807458at2"/>
<dbReference type="PhylomeDB" id="Q88MH8"/>
<dbReference type="BioCyc" id="PPUT160488:G1G01-1690-MONOMER"/>
<dbReference type="UniPathway" id="UPA00159">
    <property type="reaction ID" value="UER00275"/>
</dbReference>
<dbReference type="Proteomes" id="UP000000556">
    <property type="component" value="Chromosome"/>
</dbReference>
<dbReference type="GO" id="GO:0005829">
    <property type="term" value="C:cytosol"/>
    <property type="evidence" value="ECO:0007669"/>
    <property type="project" value="TreeGrafter"/>
</dbReference>
<dbReference type="GO" id="GO:0005524">
    <property type="term" value="F:ATP binding"/>
    <property type="evidence" value="ECO:0007669"/>
    <property type="project" value="UniProtKB-KW"/>
</dbReference>
<dbReference type="GO" id="GO:0033862">
    <property type="term" value="F:UMP kinase activity"/>
    <property type="evidence" value="ECO:0007669"/>
    <property type="project" value="UniProtKB-EC"/>
</dbReference>
<dbReference type="GO" id="GO:0044210">
    <property type="term" value="P:'de novo' CTP biosynthetic process"/>
    <property type="evidence" value="ECO:0007669"/>
    <property type="project" value="UniProtKB-UniRule"/>
</dbReference>
<dbReference type="GO" id="GO:0006225">
    <property type="term" value="P:UDP biosynthetic process"/>
    <property type="evidence" value="ECO:0007669"/>
    <property type="project" value="TreeGrafter"/>
</dbReference>
<dbReference type="CDD" id="cd04254">
    <property type="entry name" value="AAK_UMPK-PyrH-Ec"/>
    <property type="match status" value="1"/>
</dbReference>
<dbReference type="FunFam" id="3.40.1160.10:FF:000001">
    <property type="entry name" value="Uridylate kinase"/>
    <property type="match status" value="1"/>
</dbReference>
<dbReference type="Gene3D" id="3.40.1160.10">
    <property type="entry name" value="Acetylglutamate kinase-like"/>
    <property type="match status" value="1"/>
</dbReference>
<dbReference type="HAMAP" id="MF_01220_B">
    <property type="entry name" value="PyrH_B"/>
    <property type="match status" value="1"/>
</dbReference>
<dbReference type="InterPro" id="IPR036393">
    <property type="entry name" value="AceGlu_kinase-like_sf"/>
</dbReference>
<dbReference type="InterPro" id="IPR001048">
    <property type="entry name" value="Asp/Glu/Uridylate_kinase"/>
</dbReference>
<dbReference type="InterPro" id="IPR011817">
    <property type="entry name" value="Uridylate_kinase"/>
</dbReference>
<dbReference type="InterPro" id="IPR015963">
    <property type="entry name" value="Uridylate_kinase_bac"/>
</dbReference>
<dbReference type="NCBIfam" id="TIGR02075">
    <property type="entry name" value="pyrH_bact"/>
    <property type="match status" value="1"/>
</dbReference>
<dbReference type="PANTHER" id="PTHR42833">
    <property type="entry name" value="URIDYLATE KINASE"/>
    <property type="match status" value="1"/>
</dbReference>
<dbReference type="PANTHER" id="PTHR42833:SF4">
    <property type="entry name" value="URIDYLATE KINASE PUMPKIN, CHLOROPLASTIC"/>
    <property type="match status" value="1"/>
</dbReference>
<dbReference type="Pfam" id="PF00696">
    <property type="entry name" value="AA_kinase"/>
    <property type="match status" value="1"/>
</dbReference>
<dbReference type="PIRSF" id="PIRSF005650">
    <property type="entry name" value="Uridylate_kin"/>
    <property type="match status" value="1"/>
</dbReference>
<dbReference type="SUPFAM" id="SSF53633">
    <property type="entry name" value="Carbamate kinase-like"/>
    <property type="match status" value="1"/>
</dbReference>